<comment type="function">
    <text evidence="1">Transfers a succinyl group from succinyl-CoA to L-homoserine, forming succinyl-L-homoserine.</text>
</comment>
<comment type="catalytic activity">
    <reaction evidence="1">
        <text>L-homoserine + succinyl-CoA = O-succinyl-L-homoserine + CoA</text>
        <dbReference type="Rhea" id="RHEA:22008"/>
        <dbReference type="ChEBI" id="CHEBI:57287"/>
        <dbReference type="ChEBI" id="CHEBI:57292"/>
        <dbReference type="ChEBI" id="CHEBI:57476"/>
        <dbReference type="ChEBI" id="CHEBI:57661"/>
        <dbReference type="EC" id="2.3.1.46"/>
    </reaction>
</comment>
<comment type="pathway">
    <text evidence="1">Amino-acid biosynthesis; L-methionine biosynthesis via de novo pathway; O-succinyl-L-homoserine from L-homoserine: step 1/1.</text>
</comment>
<comment type="subunit">
    <text evidence="1">Homodimer.</text>
</comment>
<comment type="subcellular location">
    <subcellularLocation>
        <location evidence="1">Cytoplasm</location>
    </subcellularLocation>
</comment>
<comment type="similarity">
    <text evidence="1">Belongs to the AB hydrolase superfamily. MetX family.</text>
</comment>
<keyword id="KW-0012">Acyltransferase</keyword>
<keyword id="KW-0028">Amino-acid biosynthesis</keyword>
<keyword id="KW-0963">Cytoplasm</keyword>
<keyword id="KW-0486">Methionine biosynthesis</keyword>
<keyword id="KW-0808">Transferase</keyword>
<evidence type="ECO:0000255" key="1">
    <source>
        <dbReference type="HAMAP-Rule" id="MF_00296"/>
    </source>
</evidence>
<protein>
    <recommendedName>
        <fullName evidence="1">Homoserine O-succinyltransferase</fullName>
        <shortName evidence="1">HST</shortName>
        <ecNumber evidence="1">2.3.1.46</ecNumber>
    </recommendedName>
    <alternativeName>
        <fullName evidence="1">Homoserine transsuccinylase</fullName>
        <shortName evidence="1">HTS</shortName>
    </alternativeName>
</protein>
<dbReference type="EC" id="2.3.1.46" evidence="1"/>
<dbReference type="EMBL" id="CP000949">
    <property type="protein sequence ID" value="ACA70874.1"/>
    <property type="molecule type" value="Genomic_DNA"/>
</dbReference>
<dbReference type="SMR" id="B1J2H5"/>
<dbReference type="STRING" id="390235.PputW619_0368"/>
<dbReference type="ESTHER" id="psepu-METX">
    <property type="family name" value="Homoserine_transacetylase"/>
</dbReference>
<dbReference type="KEGG" id="ppw:PputW619_0368"/>
<dbReference type="eggNOG" id="COG2021">
    <property type="taxonomic scope" value="Bacteria"/>
</dbReference>
<dbReference type="HOGENOM" id="CLU_028760_1_2_6"/>
<dbReference type="OrthoDB" id="9800754at2"/>
<dbReference type="UniPathway" id="UPA00051">
    <property type="reaction ID" value="UER00075"/>
</dbReference>
<dbReference type="GO" id="GO:0005737">
    <property type="term" value="C:cytoplasm"/>
    <property type="evidence" value="ECO:0007669"/>
    <property type="project" value="UniProtKB-SubCell"/>
</dbReference>
<dbReference type="GO" id="GO:0004414">
    <property type="term" value="F:homoserine O-acetyltransferase activity"/>
    <property type="evidence" value="ECO:0007669"/>
    <property type="project" value="TreeGrafter"/>
</dbReference>
<dbReference type="GO" id="GO:0008899">
    <property type="term" value="F:homoserine O-succinyltransferase activity"/>
    <property type="evidence" value="ECO:0007669"/>
    <property type="project" value="UniProtKB-UniRule"/>
</dbReference>
<dbReference type="GO" id="GO:0009092">
    <property type="term" value="P:homoserine metabolic process"/>
    <property type="evidence" value="ECO:0007669"/>
    <property type="project" value="TreeGrafter"/>
</dbReference>
<dbReference type="GO" id="GO:0009086">
    <property type="term" value="P:methionine biosynthetic process"/>
    <property type="evidence" value="ECO:0007669"/>
    <property type="project" value="UniProtKB-UniRule"/>
</dbReference>
<dbReference type="FunFam" id="1.10.1740.110:FF:000001">
    <property type="entry name" value="Homoserine O-acetyltransferase"/>
    <property type="match status" value="1"/>
</dbReference>
<dbReference type="Gene3D" id="1.10.1740.110">
    <property type="match status" value="1"/>
</dbReference>
<dbReference type="Gene3D" id="3.40.50.1820">
    <property type="entry name" value="alpha/beta hydrolase"/>
    <property type="match status" value="1"/>
</dbReference>
<dbReference type="HAMAP" id="MF_00296">
    <property type="entry name" value="MetX_acyltransf"/>
    <property type="match status" value="1"/>
</dbReference>
<dbReference type="InterPro" id="IPR000073">
    <property type="entry name" value="AB_hydrolase_1"/>
</dbReference>
<dbReference type="InterPro" id="IPR029058">
    <property type="entry name" value="AB_hydrolase_fold"/>
</dbReference>
<dbReference type="InterPro" id="IPR008220">
    <property type="entry name" value="HAT_MetX-like"/>
</dbReference>
<dbReference type="NCBIfam" id="TIGR01392">
    <property type="entry name" value="homoserO_Ac_trn"/>
    <property type="match status" value="1"/>
</dbReference>
<dbReference type="NCBIfam" id="NF001209">
    <property type="entry name" value="PRK00175.1"/>
    <property type="match status" value="1"/>
</dbReference>
<dbReference type="PANTHER" id="PTHR32268">
    <property type="entry name" value="HOMOSERINE O-ACETYLTRANSFERASE"/>
    <property type="match status" value="1"/>
</dbReference>
<dbReference type="PANTHER" id="PTHR32268:SF11">
    <property type="entry name" value="HOMOSERINE O-ACETYLTRANSFERASE"/>
    <property type="match status" value="1"/>
</dbReference>
<dbReference type="Pfam" id="PF00561">
    <property type="entry name" value="Abhydrolase_1"/>
    <property type="match status" value="1"/>
</dbReference>
<dbReference type="PIRSF" id="PIRSF000443">
    <property type="entry name" value="Homoser_Ac_trans"/>
    <property type="match status" value="1"/>
</dbReference>
<dbReference type="SUPFAM" id="SSF53474">
    <property type="entry name" value="alpha/beta-Hydrolases"/>
    <property type="match status" value="1"/>
</dbReference>
<accession>B1J2H5</accession>
<organism>
    <name type="scientific">Pseudomonas putida (strain W619)</name>
    <dbReference type="NCBI Taxonomy" id="390235"/>
    <lineage>
        <taxon>Bacteria</taxon>
        <taxon>Pseudomonadati</taxon>
        <taxon>Pseudomonadota</taxon>
        <taxon>Gammaproteobacteria</taxon>
        <taxon>Pseudomonadales</taxon>
        <taxon>Pseudomonadaceae</taxon>
        <taxon>Pseudomonas</taxon>
    </lineage>
</organism>
<gene>
    <name evidence="1" type="primary">metXS</name>
    <name type="ordered locus">PputW619_0368</name>
</gene>
<feature type="chain" id="PRO_1000115233" description="Homoserine O-succinyltransferase">
    <location>
        <begin position="1"/>
        <end position="379"/>
    </location>
</feature>
<feature type="domain" description="AB hydrolase-1" evidence="1">
    <location>
        <begin position="51"/>
        <end position="360"/>
    </location>
</feature>
<feature type="active site" description="Nucleophile" evidence="1">
    <location>
        <position position="157"/>
    </location>
</feature>
<feature type="active site" evidence="1">
    <location>
        <position position="323"/>
    </location>
</feature>
<feature type="active site" evidence="1">
    <location>
        <position position="356"/>
    </location>
</feature>
<feature type="binding site" evidence="1">
    <location>
        <position position="227"/>
    </location>
    <ligand>
        <name>substrate</name>
    </ligand>
</feature>
<feature type="binding site" evidence="1">
    <location>
        <position position="357"/>
    </location>
    <ligand>
        <name>substrate</name>
    </ligand>
</feature>
<feature type="site" description="Important for acyl-CoA specificity" evidence="1">
    <location>
        <position position="325"/>
    </location>
</feature>
<sequence>MSTVLPEDSVGLVTPQTARFDEPLALACGRSLASYELVYETYGSLNASASNAVLICHALSGHHHAAGYHATTDRKPGWWDSCIGPGKPIDTNRFFVVSLNNLGGCNGSTGPSSVNPATGKPYGADFPVLTVEDWVHSQARLADRLGIRQWAAIVGGSLGGMQALQWTMTYPDRVRHCVDIASAPKLSAQNIAFNEVARQAILTDPEFHGGSFQDQGVIPKRGLMLARMVGHITYLSDDSMGEKFGRELKSDKLNYDFHSVEFQVESYLRYQGEEFSGRFDANTYLLMTKALDYFDPAAANGGDLAATLAHVTADYCIMSFTTDWRFSPARSREIVDALMAARKNVCYLEIDSPYGHDAFLIPTPRYMQGFANYMNRIAI</sequence>
<reference key="1">
    <citation type="submission" date="2008-02" db="EMBL/GenBank/DDBJ databases">
        <title>Complete sequence of Pseudomonas putida W619.</title>
        <authorList>
            <person name="Copeland A."/>
            <person name="Lucas S."/>
            <person name="Lapidus A."/>
            <person name="Barry K."/>
            <person name="Detter J.C."/>
            <person name="Glavina del Rio T."/>
            <person name="Dalin E."/>
            <person name="Tice H."/>
            <person name="Pitluck S."/>
            <person name="Chain P."/>
            <person name="Malfatti S."/>
            <person name="Shin M."/>
            <person name="Vergez L."/>
            <person name="Schmutz J."/>
            <person name="Larimer F."/>
            <person name="Land M."/>
            <person name="Hauser L."/>
            <person name="Kyrpides N."/>
            <person name="Kim E."/>
            <person name="Taghavi S."/>
            <person name="Vangronsveld D."/>
            <person name="van der Lelie D."/>
            <person name="Richardson P."/>
        </authorList>
    </citation>
    <scope>NUCLEOTIDE SEQUENCE [LARGE SCALE GENOMIC DNA]</scope>
    <source>
        <strain>W619</strain>
    </source>
</reference>
<proteinExistence type="inferred from homology"/>
<name>METXS_PSEPW</name>